<organism>
    <name type="scientific">Staphylococcus aureus (strain MSSA476)</name>
    <dbReference type="NCBI Taxonomy" id="282459"/>
    <lineage>
        <taxon>Bacteria</taxon>
        <taxon>Bacillati</taxon>
        <taxon>Bacillota</taxon>
        <taxon>Bacilli</taxon>
        <taxon>Bacillales</taxon>
        <taxon>Staphylococcaceae</taxon>
        <taxon>Staphylococcus</taxon>
    </lineage>
</organism>
<evidence type="ECO:0000255" key="1">
    <source>
        <dbReference type="HAMAP-Rule" id="MF_00259"/>
    </source>
</evidence>
<reference key="1">
    <citation type="journal article" date="2004" name="Proc. Natl. Acad. Sci. U.S.A.">
        <title>Complete genomes of two clinical Staphylococcus aureus strains: evidence for the rapid evolution of virulence and drug resistance.</title>
        <authorList>
            <person name="Holden M.T.G."/>
            <person name="Feil E.J."/>
            <person name="Lindsay J.A."/>
            <person name="Peacock S.J."/>
            <person name="Day N.P.J."/>
            <person name="Enright M.C."/>
            <person name="Foster T.J."/>
            <person name="Moore C.E."/>
            <person name="Hurst L."/>
            <person name="Atkin R."/>
            <person name="Barron A."/>
            <person name="Bason N."/>
            <person name="Bentley S.D."/>
            <person name="Chillingworth C."/>
            <person name="Chillingworth T."/>
            <person name="Churcher C."/>
            <person name="Clark L."/>
            <person name="Corton C."/>
            <person name="Cronin A."/>
            <person name="Doggett J."/>
            <person name="Dowd L."/>
            <person name="Feltwell T."/>
            <person name="Hance Z."/>
            <person name="Harris B."/>
            <person name="Hauser H."/>
            <person name="Holroyd S."/>
            <person name="Jagels K."/>
            <person name="James K.D."/>
            <person name="Lennard N."/>
            <person name="Line A."/>
            <person name="Mayes R."/>
            <person name="Moule S."/>
            <person name="Mungall K."/>
            <person name="Ormond D."/>
            <person name="Quail M.A."/>
            <person name="Rabbinowitsch E."/>
            <person name="Rutherford K.M."/>
            <person name="Sanders M."/>
            <person name="Sharp S."/>
            <person name="Simmonds M."/>
            <person name="Stevens K."/>
            <person name="Whitehead S."/>
            <person name="Barrell B.G."/>
            <person name="Spratt B.G."/>
            <person name="Parkhill J."/>
        </authorList>
    </citation>
    <scope>NUCLEOTIDE SEQUENCE [LARGE SCALE GENOMIC DNA]</scope>
    <source>
        <strain>MSSA476</strain>
    </source>
</reference>
<name>GCST_STAAS</name>
<dbReference type="EC" id="2.1.2.10" evidence="1"/>
<dbReference type="EMBL" id="BX571857">
    <property type="protein sequence ID" value="CAG43270.1"/>
    <property type="molecule type" value="Genomic_DNA"/>
</dbReference>
<dbReference type="RefSeq" id="WP_000093349.1">
    <property type="nucleotide sequence ID" value="NC_002953.3"/>
</dbReference>
<dbReference type="SMR" id="Q6G929"/>
<dbReference type="KEGG" id="sas:SAS1475"/>
<dbReference type="HOGENOM" id="CLU_007884_10_2_9"/>
<dbReference type="GO" id="GO:0005829">
    <property type="term" value="C:cytosol"/>
    <property type="evidence" value="ECO:0007669"/>
    <property type="project" value="TreeGrafter"/>
</dbReference>
<dbReference type="GO" id="GO:0005960">
    <property type="term" value="C:glycine cleavage complex"/>
    <property type="evidence" value="ECO:0007669"/>
    <property type="project" value="InterPro"/>
</dbReference>
<dbReference type="GO" id="GO:0004047">
    <property type="term" value="F:aminomethyltransferase activity"/>
    <property type="evidence" value="ECO:0007669"/>
    <property type="project" value="UniProtKB-UniRule"/>
</dbReference>
<dbReference type="GO" id="GO:0008483">
    <property type="term" value="F:transaminase activity"/>
    <property type="evidence" value="ECO:0007669"/>
    <property type="project" value="UniProtKB-KW"/>
</dbReference>
<dbReference type="GO" id="GO:0019464">
    <property type="term" value="P:glycine decarboxylation via glycine cleavage system"/>
    <property type="evidence" value="ECO:0007669"/>
    <property type="project" value="UniProtKB-UniRule"/>
</dbReference>
<dbReference type="FunFam" id="2.40.30.110:FF:000007">
    <property type="entry name" value="Aminomethyltransferase"/>
    <property type="match status" value="1"/>
</dbReference>
<dbReference type="FunFam" id="3.30.70.1400:FF:000001">
    <property type="entry name" value="Aminomethyltransferase"/>
    <property type="match status" value="1"/>
</dbReference>
<dbReference type="FunFam" id="4.10.1250.10:FF:000001">
    <property type="entry name" value="Aminomethyltransferase"/>
    <property type="match status" value="1"/>
</dbReference>
<dbReference type="Gene3D" id="2.40.30.110">
    <property type="entry name" value="Aminomethyltransferase beta-barrel domains"/>
    <property type="match status" value="1"/>
</dbReference>
<dbReference type="Gene3D" id="3.30.70.1400">
    <property type="entry name" value="Aminomethyltransferase beta-barrel domains"/>
    <property type="match status" value="1"/>
</dbReference>
<dbReference type="Gene3D" id="4.10.1250.10">
    <property type="entry name" value="Aminomethyltransferase fragment"/>
    <property type="match status" value="1"/>
</dbReference>
<dbReference type="Gene3D" id="3.30.1360.120">
    <property type="entry name" value="Probable tRNA modification gtpase trme, domain 1"/>
    <property type="match status" value="1"/>
</dbReference>
<dbReference type="HAMAP" id="MF_00259">
    <property type="entry name" value="GcvT"/>
    <property type="match status" value="1"/>
</dbReference>
<dbReference type="InterPro" id="IPR006223">
    <property type="entry name" value="GCS_T"/>
</dbReference>
<dbReference type="InterPro" id="IPR022903">
    <property type="entry name" value="GCS_T_bac"/>
</dbReference>
<dbReference type="InterPro" id="IPR013977">
    <property type="entry name" value="GCST_C"/>
</dbReference>
<dbReference type="InterPro" id="IPR006222">
    <property type="entry name" value="GCV_T_N"/>
</dbReference>
<dbReference type="InterPro" id="IPR028896">
    <property type="entry name" value="GcvT/YgfZ/DmdA"/>
</dbReference>
<dbReference type="InterPro" id="IPR029043">
    <property type="entry name" value="GcvT/YgfZ_C"/>
</dbReference>
<dbReference type="InterPro" id="IPR027266">
    <property type="entry name" value="TrmE/GcvT_dom1"/>
</dbReference>
<dbReference type="NCBIfam" id="TIGR00528">
    <property type="entry name" value="gcvT"/>
    <property type="match status" value="1"/>
</dbReference>
<dbReference type="NCBIfam" id="NF001567">
    <property type="entry name" value="PRK00389.1"/>
    <property type="match status" value="1"/>
</dbReference>
<dbReference type="PANTHER" id="PTHR43757">
    <property type="entry name" value="AMINOMETHYLTRANSFERASE"/>
    <property type="match status" value="1"/>
</dbReference>
<dbReference type="PANTHER" id="PTHR43757:SF2">
    <property type="entry name" value="AMINOMETHYLTRANSFERASE, MITOCHONDRIAL"/>
    <property type="match status" value="1"/>
</dbReference>
<dbReference type="Pfam" id="PF01571">
    <property type="entry name" value="GCV_T"/>
    <property type="match status" value="1"/>
</dbReference>
<dbReference type="Pfam" id="PF08669">
    <property type="entry name" value="GCV_T_C"/>
    <property type="match status" value="1"/>
</dbReference>
<dbReference type="PIRSF" id="PIRSF006487">
    <property type="entry name" value="GcvT"/>
    <property type="match status" value="1"/>
</dbReference>
<dbReference type="SUPFAM" id="SSF101790">
    <property type="entry name" value="Aminomethyltransferase beta-barrel domain"/>
    <property type="match status" value="1"/>
</dbReference>
<dbReference type="SUPFAM" id="SSF103025">
    <property type="entry name" value="Folate-binding domain"/>
    <property type="match status" value="1"/>
</dbReference>
<proteinExistence type="inferred from homology"/>
<keyword id="KW-0032">Aminotransferase</keyword>
<keyword id="KW-0808">Transferase</keyword>
<comment type="function">
    <text evidence="1">The glycine cleavage system catalyzes the degradation of glycine.</text>
</comment>
<comment type="catalytic activity">
    <reaction evidence="1">
        <text>N(6)-[(R)-S(8)-aminomethyldihydrolipoyl]-L-lysyl-[protein] + (6S)-5,6,7,8-tetrahydrofolate = N(6)-[(R)-dihydrolipoyl]-L-lysyl-[protein] + (6R)-5,10-methylene-5,6,7,8-tetrahydrofolate + NH4(+)</text>
        <dbReference type="Rhea" id="RHEA:16945"/>
        <dbReference type="Rhea" id="RHEA-COMP:10475"/>
        <dbReference type="Rhea" id="RHEA-COMP:10492"/>
        <dbReference type="ChEBI" id="CHEBI:15636"/>
        <dbReference type="ChEBI" id="CHEBI:28938"/>
        <dbReference type="ChEBI" id="CHEBI:57453"/>
        <dbReference type="ChEBI" id="CHEBI:83100"/>
        <dbReference type="ChEBI" id="CHEBI:83143"/>
        <dbReference type="EC" id="2.1.2.10"/>
    </reaction>
</comment>
<comment type="subunit">
    <text evidence="1">The glycine cleavage system is composed of four proteins: P, T, L and H.</text>
</comment>
<comment type="similarity">
    <text evidence="1">Belongs to the GcvT family.</text>
</comment>
<feature type="chain" id="PRO_0000122599" description="Aminomethyltransferase">
    <location>
        <begin position="1"/>
        <end position="363"/>
    </location>
</feature>
<protein>
    <recommendedName>
        <fullName evidence="1">Aminomethyltransferase</fullName>
        <ecNumber evidence="1">2.1.2.10</ecNumber>
    </recommendedName>
    <alternativeName>
        <fullName evidence="1">Glycine cleavage system T protein</fullName>
    </alternativeName>
</protein>
<sequence length="363" mass="40458">MSSDLKQTPLYQNYVDRGAKIVEFGGWAMPVQFSSIKEEHNAVRYEIGLFDVSHMGEIEVTGKDASQFVQYLLSNDTDNLTTSKALYTALCNEEGGIIDDLVIYKLADDNYLLVVNAANTEKDFNWILKHKEKFDVEVQNVSNQYGQLAIQGPKARDLINQLVDEDVTEMKMFEFKQGVKLFGANVILSQSGYTGEDGFEIYCNIDDTEKIWDGLLEYNVMPCGLGARDTLRLEAGLPLHGQDLTESITPYEGGIAFASKPLIDADFIGKSVLKDQKENGAPRRTVGLELLEKGIARTGYEVMDLDGNIIGEVTSGTQSPSSGKSIALAMIKRDEFEMGRELLVQVRKRQLKAKIVKKNQIDK</sequence>
<accession>Q6G929</accession>
<gene>
    <name evidence="1" type="primary">gcvT</name>
    <name type="ordered locus">SAS1475</name>
</gene>